<protein>
    <recommendedName>
        <fullName>Solute carrier family 12 member 4</fullName>
    </recommendedName>
    <alternativeName>
        <fullName>Electroneutral potassium-chloride cotransporter 1</fullName>
    </alternativeName>
    <alternativeName>
        <fullName>Erythroid K-Cl cotransporter 1</fullName>
        <shortName>mKCC1</shortName>
    </alternativeName>
</protein>
<evidence type="ECO:0000250" key="1">
    <source>
        <dbReference type="UniProtKB" id="Q28677"/>
    </source>
</evidence>
<evidence type="ECO:0000250" key="2">
    <source>
        <dbReference type="UniProtKB" id="Q9UHW9"/>
    </source>
</evidence>
<evidence type="ECO:0000250" key="3">
    <source>
        <dbReference type="UniProtKB" id="Q9UP95"/>
    </source>
</evidence>
<evidence type="ECO:0000255" key="4"/>
<evidence type="ECO:0000269" key="5">
    <source>
    </source>
</evidence>
<evidence type="ECO:0000269" key="6">
    <source>
    </source>
</evidence>
<evidence type="ECO:0000269" key="7">
    <source>
    </source>
</evidence>
<evidence type="ECO:0000269" key="8">
    <source>
    </source>
</evidence>
<evidence type="ECO:0000269" key="9">
    <source>
    </source>
</evidence>
<evidence type="ECO:0000305" key="10"/>
<evidence type="ECO:0007744" key="11">
    <source>
    </source>
</evidence>
<evidence type="ECO:0007744" key="12">
    <source>
    </source>
</evidence>
<dbReference type="EMBL" id="AF047339">
    <property type="protein sequence ID" value="AAC32816.1"/>
    <property type="molecule type" value="mRNA"/>
</dbReference>
<dbReference type="EMBL" id="AF121118">
    <property type="protein sequence ID" value="AAF02444.1"/>
    <property type="molecule type" value="mRNA"/>
</dbReference>
<dbReference type="EMBL" id="AF191023">
    <property type="protein sequence ID" value="AAF91094.1"/>
    <property type="molecule type" value="Genomic_DNA"/>
</dbReference>
<dbReference type="EMBL" id="AH009673">
    <property type="protein sequence ID" value="AAF91090.1"/>
    <property type="molecule type" value="Genomic_DNA"/>
</dbReference>
<dbReference type="CCDS" id="CCDS22623.1"/>
<dbReference type="RefSeq" id="NP_033221.1">
    <property type="nucleotide sequence ID" value="NM_009195.3"/>
</dbReference>
<dbReference type="SMR" id="Q9JIS8"/>
<dbReference type="BioGRID" id="203279">
    <property type="interactions" value="3"/>
</dbReference>
<dbReference type="FunCoup" id="Q9JIS8">
    <property type="interactions" value="1467"/>
</dbReference>
<dbReference type="IntAct" id="Q9JIS8">
    <property type="interactions" value="5"/>
</dbReference>
<dbReference type="MINT" id="Q9JIS8"/>
<dbReference type="STRING" id="10090.ENSMUSP00000034370"/>
<dbReference type="GlyCosmos" id="Q9JIS8">
    <property type="glycosylation" value="4 sites, No reported glycans"/>
</dbReference>
<dbReference type="GlyGen" id="Q9JIS8">
    <property type="glycosylation" value="3 sites, 2 N-linked glycans (2 sites)"/>
</dbReference>
<dbReference type="iPTMnet" id="Q9JIS8"/>
<dbReference type="PhosphoSitePlus" id="Q9JIS8"/>
<dbReference type="jPOST" id="Q9JIS8"/>
<dbReference type="PaxDb" id="10090-ENSMUSP00000112130"/>
<dbReference type="ProteomicsDB" id="256859"/>
<dbReference type="Pumba" id="Q9JIS8"/>
<dbReference type="Antibodypedia" id="29685">
    <property type="antibodies" value="174 antibodies from 30 providers"/>
</dbReference>
<dbReference type="DNASU" id="20498"/>
<dbReference type="Ensembl" id="ENSMUST00000116429.9">
    <property type="protein sequence ID" value="ENSMUSP00000112130.3"/>
    <property type="gene ID" value="ENSMUSG00000017765.18"/>
</dbReference>
<dbReference type="GeneID" id="20498"/>
<dbReference type="KEGG" id="mmu:20498"/>
<dbReference type="UCSC" id="uc009ner.2">
    <property type="organism name" value="mouse"/>
</dbReference>
<dbReference type="AGR" id="MGI:1309465"/>
<dbReference type="CTD" id="6560"/>
<dbReference type="MGI" id="MGI:1309465">
    <property type="gene designation" value="Slc12a4"/>
</dbReference>
<dbReference type="VEuPathDB" id="HostDB:ENSMUSG00000017765"/>
<dbReference type="eggNOG" id="KOG2082">
    <property type="taxonomic scope" value="Eukaryota"/>
</dbReference>
<dbReference type="GeneTree" id="ENSGT00940000157672"/>
<dbReference type="HOGENOM" id="CLU_001883_1_2_1"/>
<dbReference type="InParanoid" id="Q9JIS8"/>
<dbReference type="OMA" id="KNWRPHI"/>
<dbReference type="OrthoDB" id="2020542at2759"/>
<dbReference type="PhylomeDB" id="Q9JIS8"/>
<dbReference type="TreeFam" id="TF313657"/>
<dbReference type="Reactome" id="R-MMU-426117">
    <property type="pathway name" value="Cation-coupled Chloride cotransporters"/>
</dbReference>
<dbReference type="BioGRID-ORCS" id="20498">
    <property type="hits" value="1 hit in 78 CRISPR screens"/>
</dbReference>
<dbReference type="ChiTaRS" id="Slc12a4">
    <property type="organism name" value="mouse"/>
</dbReference>
<dbReference type="PRO" id="PR:Q9JIS8"/>
<dbReference type="Proteomes" id="UP000000589">
    <property type="component" value="Chromosome 8"/>
</dbReference>
<dbReference type="RNAct" id="Q9JIS8">
    <property type="molecule type" value="protein"/>
</dbReference>
<dbReference type="Bgee" id="ENSMUSG00000017765">
    <property type="expression patterns" value="Expressed in choroid plexus of fourth ventricle and 210 other cell types or tissues"/>
</dbReference>
<dbReference type="ExpressionAtlas" id="Q9JIS8">
    <property type="expression patterns" value="baseline and differential"/>
</dbReference>
<dbReference type="GO" id="GO:0016020">
    <property type="term" value="C:membrane"/>
    <property type="evidence" value="ECO:0000250"/>
    <property type="project" value="UniProtKB"/>
</dbReference>
<dbReference type="GO" id="GO:0005886">
    <property type="term" value="C:plasma membrane"/>
    <property type="evidence" value="ECO:0000250"/>
    <property type="project" value="UniProtKB"/>
</dbReference>
<dbReference type="GO" id="GO:0005524">
    <property type="term" value="F:ATP binding"/>
    <property type="evidence" value="ECO:0000250"/>
    <property type="project" value="UniProtKB"/>
</dbReference>
<dbReference type="GO" id="GO:0046872">
    <property type="term" value="F:metal ion binding"/>
    <property type="evidence" value="ECO:0007669"/>
    <property type="project" value="UniProtKB-KW"/>
</dbReference>
<dbReference type="GO" id="GO:0015379">
    <property type="term" value="F:potassium:chloride symporter activity"/>
    <property type="evidence" value="ECO:0000314"/>
    <property type="project" value="UniProtKB"/>
</dbReference>
<dbReference type="GO" id="GO:0055064">
    <property type="term" value="P:chloride ion homeostasis"/>
    <property type="evidence" value="ECO:0000250"/>
    <property type="project" value="UniProtKB"/>
</dbReference>
<dbReference type="GO" id="GO:0055075">
    <property type="term" value="P:potassium ion homeostasis"/>
    <property type="evidence" value="ECO:0000250"/>
    <property type="project" value="UniProtKB"/>
</dbReference>
<dbReference type="GO" id="GO:0071805">
    <property type="term" value="P:potassium ion transmembrane transport"/>
    <property type="evidence" value="ECO:0000314"/>
    <property type="project" value="UniProtKB"/>
</dbReference>
<dbReference type="FunFam" id="1.20.1740.10:FF:000049">
    <property type="entry name" value="Solute carrier family 12 (potassium/chloride transporter), member 4"/>
    <property type="match status" value="1"/>
</dbReference>
<dbReference type="FunFam" id="1.20.1740.10:FF:000040">
    <property type="entry name" value="Solute carrier family 12 member 6"/>
    <property type="match status" value="1"/>
</dbReference>
<dbReference type="Gene3D" id="1.20.1740.10">
    <property type="entry name" value="Amino acid/polyamine transporter I"/>
    <property type="match status" value="1"/>
</dbReference>
<dbReference type="InterPro" id="IPR004841">
    <property type="entry name" value="AA-permease/SLC12A_dom"/>
</dbReference>
<dbReference type="InterPro" id="IPR000622">
    <property type="entry name" value="KCC1"/>
</dbReference>
<dbReference type="InterPro" id="IPR000076">
    <property type="entry name" value="KCL_cotranspt"/>
</dbReference>
<dbReference type="InterPro" id="IPR018491">
    <property type="entry name" value="SLC12_C"/>
</dbReference>
<dbReference type="InterPro" id="IPR004842">
    <property type="entry name" value="SLC12A_fam"/>
</dbReference>
<dbReference type="NCBIfam" id="TIGR00930">
    <property type="entry name" value="2a30"/>
    <property type="match status" value="1"/>
</dbReference>
<dbReference type="PANTHER" id="PTHR11827:SF46">
    <property type="entry name" value="SOLUTE CARRIER FAMILY 12 MEMBER 4"/>
    <property type="match status" value="1"/>
</dbReference>
<dbReference type="PANTHER" id="PTHR11827">
    <property type="entry name" value="SOLUTE CARRIER FAMILY 12, CATION COTRANSPORTERS"/>
    <property type="match status" value="1"/>
</dbReference>
<dbReference type="Pfam" id="PF00324">
    <property type="entry name" value="AA_permease"/>
    <property type="match status" value="2"/>
</dbReference>
<dbReference type="Pfam" id="PF03522">
    <property type="entry name" value="SLC12"/>
    <property type="match status" value="2"/>
</dbReference>
<dbReference type="PRINTS" id="PR01081">
    <property type="entry name" value="KCLTRNSPORT"/>
</dbReference>
<dbReference type="PRINTS" id="PR01082">
    <property type="entry name" value="KCLTRNSPORT1"/>
</dbReference>
<organism>
    <name type="scientific">Mus musculus</name>
    <name type="common">Mouse</name>
    <dbReference type="NCBI Taxonomy" id="10090"/>
    <lineage>
        <taxon>Eukaryota</taxon>
        <taxon>Metazoa</taxon>
        <taxon>Chordata</taxon>
        <taxon>Craniata</taxon>
        <taxon>Vertebrata</taxon>
        <taxon>Euteleostomi</taxon>
        <taxon>Mammalia</taxon>
        <taxon>Eutheria</taxon>
        <taxon>Euarchontoglires</taxon>
        <taxon>Glires</taxon>
        <taxon>Rodentia</taxon>
        <taxon>Myomorpha</taxon>
        <taxon>Muroidea</taxon>
        <taxon>Muridae</taxon>
        <taxon>Murinae</taxon>
        <taxon>Mus</taxon>
        <taxon>Mus</taxon>
    </lineage>
</organism>
<sequence length="1085" mass="120624">MPHFTVVPVDGPRRGDYDNLEGLSWVDYGERAEREDSDGQGNHRENSPFLCPLDASRGNDYYDRNLALFEEELDIRPKVSSLLGKLVSYTNLTQGAKEHEEAESGEGGRRRAAKAPSMGTLMGVYLPCLQNIFGVILFLRLTWMVGTAGVLQALLIVLICCCCTLLTAISMSAIATNGVVPAGGSYFMISRSLGPEFGGAVGLCFYLGTTFAAAMYILGAIEILLTYIAPPAAIFYPSGTHDMSSATLNNMRVYGTIFLTLMTLVVFVGVKYVNKFASLFLACVIISILSIYAGGIKSIFDPPVFPVCMLGNRTLSRDQFDICAKTVVVDNETVATRLWTFFCHSPNLTADSCDPYFLLNNVTEIPGIPGAAAGVLQENLWSAYLEKGEVVEKHGLPSTDTLGLKESLSLYVVADIATSFTVLVGIFFPSVTGIMAGSNRSGDLRDAQKSIPVGTILAIVTTSLVYFSSVILFGACIEGVVLRDKYGDGVSRNLVVGTLAWPSPWVIVVGSFFSTCGAGLQSLTGAPRLLQAIAKDNIIPFLRVFGHGKANGEPTWALLLTALIAELGILIASLDMVAPILSMFFLMCYLFVNLACAVQTLLRTPNWRPRFKYYHWTLSFLGMSLCLALMFVSSWYYALVAMLIAGMIYKYIEYQGAEKEWGDGIRGLSLSAARYALLRLEEGPPHTKNWRPQLLVLLKLDEDLHVKYPRLLTFASQLKAGKGLTIVGSVIQGSFLESYGEAQAAEQTIKNMMDIEKVKGFCQVVVASKVREGLAHLIQSCGLGGMRHNSVVLGWPYGWRQSEDPRAWKTFIDTVRCTTAAHLALLVPKNIAFYPSNHERYLDGHIDVWWIVHDGGMLMLLPFLLRQHKVWKKCRMRIFTVAQMDDNSIQMKKDLAIFLYHLRLEAEVEVVEMHNSDISAYTYERTLMMEQRSQMLRQMRLTKTERDREAQLVKDRHSALRLESLYSDEEEESVAGADKIQMTWTRDKYMAEPWDPSHAPDNFRELVHIKPDQSNVRRMHTAVKLNEVIVTRSHDARLVLLNMPGPPKNSEGDENYMEFLEVLTEGLERVLLVRGGGREVITIYS</sequence>
<proteinExistence type="evidence at protein level"/>
<reference key="1">
    <citation type="journal article" date="1998" name="Blood Cells Mol. Dis.">
        <title>Molecular identification and expression of erythroid K:Cl cotransporter in human and mouse erythroleukemic cells.</title>
        <authorList>
            <person name="Pellegrino C.M."/>
            <person name="Rybicki A.C."/>
            <person name="Musto S."/>
            <person name="Nagel R.L."/>
            <person name="Schwartz R.S."/>
        </authorList>
    </citation>
    <scope>NUCLEOTIDE SEQUENCE [MRNA]</scope>
    <scope>TISSUE SPECIFICITY</scope>
    <scope>DEVELOPMENTAL STAGE</scope>
    <source>
        <strain>DBA</strain>
        <tissue>Erythroleukemia</tissue>
    </source>
</reference>
<reference key="2">
    <citation type="journal article" date="1999" name="Am. J. Physiol.">
        <title>Mouse K-Cl cotransporter KCC1: cloning, mapping, pathological expression, and functional regulation.</title>
        <authorList>
            <person name="Su W."/>
            <person name="Shmukler B.E."/>
            <person name="Chernova M.N."/>
            <person name="Stuart-Tilley A.K."/>
            <person name="de Franceschi L."/>
            <person name="Brugnara C."/>
            <person name="Alper S.L."/>
        </authorList>
    </citation>
    <scope>NUCLEOTIDE SEQUENCE [MRNA]</scope>
    <scope>FUNCTION</scope>
    <source>
        <strain>CD-1</strain>
        <tissue>Brain</tissue>
        <tissue>Spleen</tissue>
    </source>
</reference>
<reference key="3">
    <citation type="journal article" date="2000" name="Biochim. Biophys. Acta">
        <title>Structure and genetic polymorphism of the mouse KCC1 gene.</title>
        <authorList>
            <person name="Shmukler B.E."/>
            <person name="Brugnara C."/>
            <person name="Alper S.L."/>
        </authorList>
    </citation>
    <scope>NUCLEOTIDE SEQUENCE [GENOMIC DNA]</scope>
</reference>
<reference key="4">
    <citation type="journal article" date="2001" name="J. Biol. Chem.">
        <title>A dominant negative mutant of the KCC1 K-Cl cotransporter: both N- and C-terminal cytoplasmic domains are required for K-Cl cotransport activity.</title>
        <authorList>
            <person name="Casula S."/>
            <person name="Shmukler B.E."/>
            <person name="Wilhelm S."/>
            <person name="Stuart-Tilley A.K."/>
            <person name="Su W."/>
            <person name="Chernova M.N."/>
            <person name="Brugnara C."/>
            <person name="Alper S.L."/>
        </authorList>
    </citation>
    <scope>FUNCTION</scope>
    <scope>TRANSPORTER ACTIVITY</scope>
    <scope>SUBUNIT</scope>
</reference>
<reference key="5">
    <citation type="journal article" date="2007" name="Proc. Natl. Acad. Sci. U.S.A.">
        <title>Large-scale phosphorylation analysis of mouse liver.</title>
        <authorList>
            <person name="Villen J."/>
            <person name="Beausoleil S.A."/>
            <person name="Gerber S.A."/>
            <person name="Gygi S.P."/>
        </authorList>
    </citation>
    <scope>IDENTIFICATION BY MASS SPECTROMETRY [LARGE SCALE ANALYSIS]</scope>
    <source>
        <tissue>Liver</tissue>
    </source>
</reference>
<reference key="6">
    <citation type="journal article" date="2009" name="Immunity">
        <title>The phagosomal proteome in interferon-gamma-activated macrophages.</title>
        <authorList>
            <person name="Trost M."/>
            <person name="English L."/>
            <person name="Lemieux S."/>
            <person name="Courcelles M."/>
            <person name="Desjardins M."/>
            <person name="Thibault P."/>
        </authorList>
    </citation>
    <scope>PHOSPHORYLATION [LARGE SCALE ANALYSIS] AT SER-47</scope>
    <scope>IDENTIFICATION BY MASS SPECTROMETRY [LARGE SCALE ANALYSIS]</scope>
</reference>
<reference key="7">
    <citation type="journal article" date="2009" name="Mol. Cell. Proteomics">
        <title>The mouse C2C12 myoblast cell surface N-linked glycoproteome: identification, glycosite occupancy, and membrane orientation.</title>
        <authorList>
            <person name="Gundry R.L."/>
            <person name="Raginski K."/>
            <person name="Tarasova Y."/>
            <person name="Tchernyshyov I."/>
            <person name="Bausch-Fluck D."/>
            <person name="Elliott S.T."/>
            <person name="Boheler K.R."/>
            <person name="Van Eyk J.E."/>
            <person name="Wollscheid B."/>
        </authorList>
    </citation>
    <scope>GLYCOSYLATION [LARGE SCALE ANALYSIS] AT ASN-331</scope>
    <source>
        <tissue>Myoblast</tissue>
    </source>
</reference>
<reference key="8">
    <citation type="journal article" date="2009" name="Nat. Biotechnol.">
        <title>Mass-spectrometric identification and relative quantification of N-linked cell surface glycoproteins.</title>
        <authorList>
            <person name="Wollscheid B."/>
            <person name="Bausch-Fluck D."/>
            <person name="Henderson C."/>
            <person name="O'Brien R."/>
            <person name="Bibel M."/>
            <person name="Schiess R."/>
            <person name="Aebersold R."/>
            <person name="Watts J.D."/>
        </authorList>
    </citation>
    <scope>GLYCOSYLATION [LARGE SCALE ANALYSIS] AT ASN-331</scope>
</reference>
<reference key="9">
    <citation type="journal article" date="2010" name="Cell">
        <title>A tissue-specific atlas of mouse protein phosphorylation and expression.</title>
        <authorList>
            <person name="Huttlin E.L."/>
            <person name="Jedrychowski M.P."/>
            <person name="Elias J.E."/>
            <person name="Goswami T."/>
            <person name="Rad R."/>
            <person name="Beausoleil S.A."/>
            <person name="Villen J."/>
            <person name="Haas W."/>
            <person name="Sowa M.E."/>
            <person name="Gygi S.P."/>
        </authorList>
    </citation>
    <scope>PHOSPHORYLATION [LARGE SCALE ANALYSIS] AT SER-24 AND SER-967</scope>
    <scope>IDENTIFICATION BY MASS SPECTROMETRY [LARGE SCALE ANALYSIS]</scope>
    <source>
        <tissue>Brain</tissue>
        <tissue>Brown adipose tissue</tissue>
        <tissue>Heart</tissue>
        <tissue>Kidney</tissue>
        <tissue>Liver</tissue>
        <tissue>Lung</tissue>
        <tissue>Spleen</tissue>
        <tissue>Testis</tissue>
    </source>
</reference>
<name>S12A4_MOUSE</name>
<comment type="function">
    <text evidence="5 6 10">Mediates electroneutral potassium-chloride cotransport when activated by cell swelling (PubMed:10564083, PubMed:11551954). May contribute to cell volume homeostasis in single cells. May be involved in the regulation of basolateral Cl(-) exit in NaCl absorbing epithelia (Probable).</text>
</comment>
<comment type="catalytic activity">
    <reaction evidence="6">
        <text>K(+)(in) + chloride(in) = K(+)(out) + chloride(out)</text>
        <dbReference type="Rhea" id="RHEA:72427"/>
        <dbReference type="ChEBI" id="CHEBI:17996"/>
        <dbReference type="ChEBI" id="CHEBI:29103"/>
    </reaction>
</comment>
<comment type="activity regulation">
    <text evidence="3">Inhibited by WNK3.</text>
</comment>
<comment type="subunit">
    <text evidence="3 6">Homodimer; adopts a domain-swap conformation at the scissor helices connecting the transmembrane domain and C-terminal domain. Heterodimer with other K-Cl cotransporters.</text>
</comment>
<comment type="subcellular location">
    <subcellularLocation>
        <location evidence="1">Cell membrane</location>
        <topology evidence="4">Multi-pass membrane protein</topology>
    </subcellularLocation>
</comment>
<comment type="tissue specificity">
    <text evidence="9">Detected in embryo, adult heart, erythrocytes, brain, kidney, stomach, ovary, testis and liver.</text>
</comment>
<comment type="developmental stage">
    <text evidence="9">Expression levels remained constant upon induction of erythroid differentiation of embryonic stem cells (PubMed:9516379). Not detected in reticulocytes, but present during differentiation of erythroleukemia cells to erythroblasts (PubMed:9516379).</text>
</comment>
<comment type="PTM">
    <text evidence="3">Phosphorylated, phosphorylation may regulate transporter activity.</text>
</comment>
<comment type="miscellaneous">
    <text>Activated by N-ethylmaleimide (NEM). Inhibited by DIOA.</text>
</comment>
<comment type="similarity">
    <text evidence="10">Belongs to the SLC12A transporter family. K/Cl co-transporter subfamily.</text>
</comment>
<feature type="chain" id="PRO_0000178031" description="Solute carrier family 12 member 4">
    <location>
        <begin position="1"/>
        <end position="1085"/>
    </location>
</feature>
<feature type="topological domain" description="Cytoplasmic" evidence="10">
    <location>
        <begin position="1"/>
        <end position="119"/>
    </location>
</feature>
<feature type="transmembrane region" description="Discontinuously helical; Name=1" evidence="3">
    <location>
        <begin position="120"/>
        <end position="141"/>
    </location>
</feature>
<feature type="topological domain" description="Extracellular" evidence="10">
    <location>
        <begin position="142"/>
        <end position="149"/>
    </location>
</feature>
<feature type="transmembrane region" description="Helical; Name=2" evidence="3">
    <location>
        <begin position="150"/>
        <end position="172"/>
    </location>
</feature>
<feature type="topological domain" description="Cytoplasmic" evidence="10">
    <location>
        <begin position="173"/>
        <end position="196"/>
    </location>
</feature>
<feature type="transmembrane region" description="Helical; Name=3" evidence="3">
    <location>
        <begin position="197"/>
        <end position="225"/>
    </location>
</feature>
<feature type="topological domain" description="Extracellular" evidence="10">
    <location>
        <begin position="226"/>
        <end position="248"/>
    </location>
</feature>
<feature type="transmembrane region" description="Helical; Name=4" evidence="3">
    <location>
        <begin position="249"/>
        <end position="271"/>
    </location>
</feature>
<feature type="transmembrane region" description="Helical; Name=5" evidence="3">
    <location>
        <begin position="272"/>
        <end position="297"/>
    </location>
</feature>
<feature type="topological domain" description="Extracellular" evidence="10">
    <location>
        <begin position="298"/>
        <end position="419"/>
    </location>
</feature>
<feature type="transmembrane region" description="Helical; Name=6" evidence="3">
    <location>
        <begin position="420"/>
        <end position="440"/>
    </location>
</feature>
<feature type="topological domain" description="Cytoplasmic" evidence="10">
    <location>
        <begin position="441"/>
        <end position="450"/>
    </location>
</feature>
<feature type="transmembrane region" description="Helical; Name=7" evidence="3">
    <location>
        <begin position="451"/>
        <end position="473"/>
    </location>
</feature>
<feature type="topological domain" description="Extracellular" evidence="10">
    <location>
        <begin position="474"/>
        <end position="504"/>
    </location>
</feature>
<feature type="transmembrane region" description="Helical; Name=8" evidence="3">
    <location>
        <begin position="505"/>
        <end position="531"/>
    </location>
</feature>
<feature type="topological domain" description="Cytoplasmic" evidence="10">
    <location>
        <begin position="532"/>
        <end position="554"/>
    </location>
</feature>
<feature type="transmembrane region" description="Helical; Name=9" evidence="3">
    <location>
        <begin position="555"/>
        <end position="575"/>
    </location>
</feature>
<feature type="transmembrane region" description="Helical; Name=10" evidence="3">
    <location>
        <begin position="576"/>
        <end position="598"/>
    </location>
</feature>
<feature type="topological domain" description="Cytoplasmic" evidence="10">
    <location>
        <begin position="599"/>
        <end position="612"/>
    </location>
</feature>
<feature type="transmembrane region" description="Helical; Name=11" evidence="3">
    <location>
        <begin position="613"/>
        <end position="635"/>
    </location>
</feature>
<feature type="transmembrane region" description="Helical; Name=12" evidence="3">
    <location>
        <begin position="636"/>
        <end position="651"/>
    </location>
</feature>
<feature type="topological domain" description="Cytoplasmic" evidence="10">
    <location>
        <begin position="652"/>
        <end position="1085"/>
    </location>
</feature>
<feature type="region of interest" description="Scissor helix" evidence="3">
    <location>
        <begin position="665"/>
        <end position="681"/>
    </location>
</feature>
<feature type="binding site" evidence="3">
    <location>
        <position position="131"/>
    </location>
    <ligand>
        <name>K(+)</name>
        <dbReference type="ChEBI" id="CHEBI:29103"/>
    </ligand>
</feature>
<feature type="binding site" evidence="3">
    <location>
        <position position="132"/>
    </location>
    <ligand>
        <name>K(+)</name>
        <dbReference type="ChEBI" id="CHEBI:29103"/>
    </ligand>
</feature>
<feature type="binding site" evidence="3">
    <location>
        <position position="216"/>
    </location>
    <ligand>
        <name>K(+)</name>
        <dbReference type="ChEBI" id="CHEBI:29103"/>
    </ligand>
</feature>
<feature type="binding site" evidence="3">
    <location>
        <position position="429"/>
    </location>
    <ligand>
        <name>K(+)</name>
        <dbReference type="ChEBI" id="CHEBI:29103"/>
    </ligand>
</feature>
<feature type="binding site" evidence="3">
    <location>
        <position position="432"/>
    </location>
    <ligand>
        <name>K(+)</name>
        <dbReference type="ChEBI" id="CHEBI:29103"/>
    </ligand>
</feature>
<feature type="binding site" evidence="3">
    <location>
        <position position="433"/>
    </location>
    <ligand>
        <name>chloride</name>
        <dbReference type="ChEBI" id="CHEBI:17996"/>
        <label>1</label>
    </ligand>
</feature>
<feature type="binding site" evidence="3">
    <location>
        <position position="434"/>
    </location>
    <ligand>
        <name>chloride</name>
        <dbReference type="ChEBI" id="CHEBI:17996"/>
        <label>1</label>
    </ligand>
</feature>
<feature type="binding site" evidence="3">
    <location>
        <position position="435"/>
    </location>
    <ligand>
        <name>chloride</name>
        <dbReference type="ChEBI" id="CHEBI:17996"/>
        <label>1</label>
    </ligand>
</feature>
<feature type="binding site" evidence="3">
    <location>
        <position position="589"/>
    </location>
    <ligand>
        <name>chloride</name>
        <dbReference type="ChEBI" id="CHEBI:17996"/>
        <label>1</label>
    </ligand>
</feature>
<feature type="binding site" evidence="3">
    <location>
        <position position="589"/>
    </location>
    <ligand>
        <name>chloride</name>
        <dbReference type="ChEBI" id="CHEBI:17996"/>
        <label>2</label>
    </ligand>
</feature>
<feature type="binding site" evidence="3">
    <location>
        <position position="697"/>
    </location>
    <ligand>
        <name>ATP</name>
        <dbReference type="ChEBI" id="CHEBI:30616"/>
    </ligand>
</feature>
<feature type="binding site" evidence="3">
    <location>
        <position position="699"/>
    </location>
    <ligand>
        <name>ATP</name>
        <dbReference type="ChEBI" id="CHEBI:30616"/>
    </ligand>
</feature>
<feature type="binding site" evidence="3">
    <location>
        <position position="707"/>
    </location>
    <ligand>
        <name>ATP</name>
        <dbReference type="ChEBI" id="CHEBI:30616"/>
    </ligand>
</feature>
<feature type="binding site" evidence="3">
    <location>
        <position position="708"/>
    </location>
    <ligand>
        <name>ATP</name>
        <dbReference type="ChEBI" id="CHEBI:30616"/>
    </ligand>
</feature>
<feature type="binding site" evidence="3">
    <location>
        <position position="730"/>
    </location>
    <ligand>
        <name>ATP</name>
        <dbReference type="ChEBI" id="CHEBI:30616"/>
    </ligand>
</feature>
<feature type="binding site" evidence="3">
    <location>
        <position position="794"/>
    </location>
    <ligand>
        <name>ATP</name>
        <dbReference type="ChEBI" id="CHEBI:30616"/>
    </ligand>
</feature>
<feature type="binding site" evidence="3">
    <location>
        <position position="795"/>
    </location>
    <ligand>
        <name>ATP</name>
        <dbReference type="ChEBI" id="CHEBI:30616"/>
    </ligand>
</feature>
<feature type="binding site" evidence="3">
    <location>
        <position position="797"/>
    </location>
    <ligand>
        <name>ATP</name>
        <dbReference type="ChEBI" id="CHEBI:30616"/>
    </ligand>
</feature>
<feature type="modified residue" description="Phosphoserine" evidence="12">
    <location>
        <position position="24"/>
    </location>
</feature>
<feature type="modified residue" description="Phosphoserine" evidence="11">
    <location>
        <position position="47"/>
    </location>
</feature>
<feature type="modified residue" description="Phosphoserine" evidence="2">
    <location>
        <position position="81"/>
    </location>
</feature>
<feature type="modified residue" description="Phosphoserine" evidence="3">
    <location>
        <position position="88"/>
    </location>
</feature>
<feature type="modified residue" description="Phosphoserine" evidence="3">
    <location>
        <position position="734"/>
    </location>
</feature>
<feature type="modified residue" description="Phosphoserine" evidence="3">
    <location>
        <position position="916"/>
    </location>
</feature>
<feature type="modified residue" description="Phosphoserine" evidence="12">
    <location>
        <position position="967"/>
    </location>
</feature>
<feature type="modified residue" description="Phosphothreonine" evidence="3">
    <location>
        <position position="983"/>
    </location>
</feature>
<feature type="modified residue" description="Phosphoserine" evidence="3">
    <location>
        <position position="1050"/>
    </location>
</feature>
<feature type="glycosylation site" description="N-linked (GlcNAc...) asparagine" evidence="4">
    <location>
        <position position="312"/>
    </location>
</feature>
<feature type="glycosylation site" description="N-linked (GlcNAc...) asparagine" evidence="7 8">
    <location>
        <position position="331"/>
    </location>
</feature>
<feature type="glycosylation site" description="N-linked (GlcNAc...) asparagine" evidence="4">
    <location>
        <position position="347"/>
    </location>
</feature>
<feature type="disulfide bond" evidence="3">
    <location>
        <begin position="308"/>
        <end position="323"/>
    </location>
</feature>
<feature type="disulfide bond" evidence="3">
    <location>
        <begin position="343"/>
        <end position="353"/>
    </location>
</feature>
<keyword id="KW-0067">ATP-binding</keyword>
<keyword id="KW-1003">Cell membrane</keyword>
<keyword id="KW-0868">Chloride</keyword>
<keyword id="KW-1015">Disulfide bond</keyword>
<keyword id="KW-0325">Glycoprotein</keyword>
<keyword id="KW-0406">Ion transport</keyword>
<keyword id="KW-0472">Membrane</keyword>
<keyword id="KW-0479">Metal-binding</keyword>
<keyword id="KW-0547">Nucleotide-binding</keyword>
<keyword id="KW-0597">Phosphoprotein</keyword>
<keyword id="KW-0630">Potassium</keyword>
<keyword id="KW-0633">Potassium transport</keyword>
<keyword id="KW-1185">Reference proteome</keyword>
<keyword id="KW-0769">Symport</keyword>
<keyword id="KW-0812">Transmembrane</keyword>
<keyword id="KW-1133">Transmembrane helix</keyword>
<keyword id="KW-0813">Transport</keyword>
<gene>
    <name type="primary">Slc12a4</name>
    <name type="synonym">Kcc1</name>
</gene>
<accession>Q9JIS8</accession>
<accession>O55069</accession>
<accession>Q9ET57</accession>